<reference key="1">
    <citation type="journal article" date="1988" name="Science">
        <title>Cloning and expression of the human interleukin-6 (BSF-2/IFN beta 2) receptor.</title>
        <authorList>
            <person name="Yamasaki K."/>
            <person name="Taga T."/>
            <person name="Hirata Y."/>
            <person name="Yawata H."/>
            <person name="Kawanishi Y."/>
            <person name="Seed B."/>
            <person name="Taniguchi T."/>
            <person name="Hirano T."/>
            <person name="Kishimoto T."/>
        </authorList>
    </citation>
    <scope>NUCLEOTIDE SEQUENCE [MRNA] (ISOFORM 1)</scope>
</reference>
<reference key="2">
    <citation type="journal article" date="1988" name="Proc. Jpn. Acad., B, Phys. Biol. Sci.">
        <title>Molecular structure of interleukin 6 receptor.</title>
        <authorList>
            <person name="Yamasaki K."/>
            <person name="Taga T."/>
            <person name="Hirata Y."/>
            <person name="Yawata H."/>
            <person name="Kawanishi Y."/>
            <person name="Seed B."/>
            <person name="Taniguchi T."/>
            <person name="Hirano T."/>
            <person name="Kishimoto T."/>
        </authorList>
    </citation>
    <scope>NUCLEOTIDE SEQUENCE [MRNA] (ISOFORM 1)</scope>
</reference>
<reference key="3">
    <citation type="journal article" date="1991" name="Biochem. J.">
        <title>Structural and functional studies on the human hepatic interleukin-6 receptor. Molecular cloning and overexpression in HepG2 cells.</title>
        <authorList>
            <person name="Schooltink H."/>
            <person name="Stoyan T."/>
            <person name="Lenz D."/>
            <person name="Schmitz H."/>
            <person name="Hirano T."/>
            <person name="Kishimoto T."/>
            <person name="Heinrich P.C."/>
            <person name="Rose-John S."/>
        </authorList>
    </citation>
    <scope>NUCLEOTIDE SEQUENCE [MRNA] (ISOFORM 1)</scope>
</reference>
<reference key="4">
    <citation type="journal article" date="2004" name="Nat. Genet.">
        <title>Complete sequencing and characterization of 21,243 full-length human cDNAs.</title>
        <authorList>
            <person name="Ota T."/>
            <person name="Suzuki Y."/>
            <person name="Nishikawa T."/>
            <person name="Otsuki T."/>
            <person name="Sugiyama T."/>
            <person name="Irie R."/>
            <person name="Wakamatsu A."/>
            <person name="Hayashi K."/>
            <person name="Sato H."/>
            <person name="Nagai K."/>
            <person name="Kimura K."/>
            <person name="Makita H."/>
            <person name="Sekine M."/>
            <person name="Obayashi M."/>
            <person name="Nishi T."/>
            <person name="Shibahara T."/>
            <person name="Tanaka T."/>
            <person name="Ishii S."/>
            <person name="Yamamoto J."/>
            <person name="Saito K."/>
            <person name="Kawai Y."/>
            <person name="Isono Y."/>
            <person name="Nakamura Y."/>
            <person name="Nagahari K."/>
            <person name="Murakami K."/>
            <person name="Yasuda T."/>
            <person name="Iwayanagi T."/>
            <person name="Wagatsuma M."/>
            <person name="Shiratori A."/>
            <person name="Sudo H."/>
            <person name="Hosoiri T."/>
            <person name="Kaku Y."/>
            <person name="Kodaira H."/>
            <person name="Kondo H."/>
            <person name="Sugawara M."/>
            <person name="Takahashi M."/>
            <person name="Kanda K."/>
            <person name="Yokoi T."/>
            <person name="Furuya T."/>
            <person name="Kikkawa E."/>
            <person name="Omura Y."/>
            <person name="Abe K."/>
            <person name="Kamihara K."/>
            <person name="Katsuta N."/>
            <person name="Sato K."/>
            <person name="Tanikawa M."/>
            <person name="Yamazaki M."/>
            <person name="Ninomiya K."/>
            <person name="Ishibashi T."/>
            <person name="Yamashita H."/>
            <person name="Murakawa K."/>
            <person name="Fujimori K."/>
            <person name="Tanai H."/>
            <person name="Kimata M."/>
            <person name="Watanabe M."/>
            <person name="Hiraoka S."/>
            <person name="Chiba Y."/>
            <person name="Ishida S."/>
            <person name="Ono Y."/>
            <person name="Takiguchi S."/>
            <person name="Watanabe S."/>
            <person name="Yosida M."/>
            <person name="Hotuta T."/>
            <person name="Kusano J."/>
            <person name="Kanehori K."/>
            <person name="Takahashi-Fujii A."/>
            <person name="Hara H."/>
            <person name="Tanase T.-O."/>
            <person name="Nomura Y."/>
            <person name="Togiya S."/>
            <person name="Komai F."/>
            <person name="Hara R."/>
            <person name="Takeuchi K."/>
            <person name="Arita M."/>
            <person name="Imose N."/>
            <person name="Musashino K."/>
            <person name="Yuuki H."/>
            <person name="Oshima A."/>
            <person name="Sasaki N."/>
            <person name="Aotsuka S."/>
            <person name="Yoshikawa Y."/>
            <person name="Matsunawa H."/>
            <person name="Ichihara T."/>
            <person name="Shiohata N."/>
            <person name="Sano S."/>
            <person name="Moriya S."/>
            <person name="Momiyama H."/>
            <person name="Satoh N."/>
            <person name="Takami S."/>
            <person name="Terashima Y."/>
            <person name="Suzuki O."/>
            <person name="Nakagawa S."/>
            <person name="Senoh A."/>
            <person name="Mizoguchi H."/>
            <person name="Goto Y."/>
            <person name="Shimizu F."/>
            <person name="Wakebe H."/>
            <person name="Hishigaki H."/>
            <person name="Watanabe T."/>
            <person name="Sugiyama A."/>
            <person name="Takemoto M."/>
            <person name="Kawakami B."/>
            <person name="Yamazaki M."/>
            <person name="Watanabe K."/>
            <person name="Kumagai A."/>
            <person name="Itakura S."/>
            <person name="Fukuzumi Y."/>
            <person name="Fujimori Y."/>
            <person name="Komiyama M."/>
            <person name="Tashiro H."/>
            <person name="Tanigami A."/>
            <person name="Fujiwara T."/>
            <person name="Ono T."/>
            <person name="Yamada K."/>
            <person name="Fujii Y."/>
            <person name="Ozaki K."/>
            <person name="Hirao M."/>
            <person name="Ohmori Y."/>
            <person name="Kawabata A."/>
            <person name="Hikiji T."/>
            <person name="Kobatake N."/>
            <person name="Inagaki H."/>
            <person name="Ikema Y."/>
            <person name="Okamoto S."/>
            <person name="Okitani R."/>
            <person name="Kawakami T."/>
            <person name="Noguchi S."/>
            <person name="Itoh T."/>
            <person name="Shigeta K."/>
            <person name="Senba T."/>
            <person name="Matsumura K."/>
            <person name="Nakajima Y."/>
            <person name="Mizuno T."/>
            <person name="Morinaga M."/>
            <person name="Sasaki M."/>
            <person name="Togashi T."/>
            <person name="Oyama M."/>
            <person name="Hata H."/>
            <person name="Watanabe M."/>
            <person name="Komatsu T."/>
            <person name="Mizushima-Sugano J."/>
            <person name="Satoh T."/>
            <person name="Shirai Y."/>
            <person name="Takahashi Y."/>
            <person name="Nakagawa K."/>
            <person name="Okumura K."/>
            <person name="Nagase T."/>
            <person name="Nomura N."/>
            <person name="Kikuchi H."/>
            <person name="Masuho Y."/>
            <person name="Yamashita R."/>
            <person name="Nakai K."/>
            <person name="Yada T."/>
            <person name="Nakamura Y."/>
            <person name="Ohara O."/>
            <person name="Isogai T."/>
            <person name="Sugano S."/>
        </authorList>
    </citation>
    <scope>NUCLEOTIDE SEQUENCE [LARGE SCALE MRNA] (ISOFORMS 1 AND 2)</scope>
    <scope>VARIANT ALA-358</scope>
    <source>
        <tissue>Trachea</tissue>
    </source>
</reference>
<reference key="5">
    <citation type="submission" date="2005-04" db="EMBL/GenBank/DDBJ databases">
        <authorList>
            <person name="Totoki Y."/>
            <person name="Toyoda A."/>
            <person name="Takeda T."/>
            <person name="Sakaki Y."/>
            <person name="Tanaka A."/>
            <person name="Yokoyama S."/>
        </authorList>
    </citation>
    <scope>NUCLEOTIDE SEQUENCE [LARGE SCALE MRNA] (ISOFORM 1)</scope>
    <source>
        <tissue>Kidney</tissue>
    </source>
</reference>
<reference key="6">
    <citation type="journal article" date="2006" name="Nature">
        <title>The DNA sequence and biological annotation of human chromosome 1.</title>
        <authorList>
            <person name="Gregory S.G."/>
            <person name="Barlow K.F."/>
            <person name="McLay K.E."/>
            <person name="Kaul R."/>
            <person name="Swarbreck D."/>
            <person name="Dunham A."/>
            <person name="Scott C.E."/>
            <person name="Howe K.L."/>
            <person name="Woodfine K."/>
            <person name="Spencer C.C.A."/>
            <person name="Jones M.C."/>
            <person name="Gillson C."/>
            <person name="Searle S."/>
            <person name="Zhou Y."/>
            <person name="Kokocinski F."/>
            <person name="McDonald L."/>
            <person name="Evans R."/>
            <person name="Phillips K."/>
            <person name="Atkinson A."/>
            <person name="Cooper R."/>
            <person name="Jones C."/>
            <person name="Hall R.E."/>
            <person name="Andrews T.D."/>
            <person name="Lloyd C."/>
            <person name="Ainscough R."/>
            <person name="Almeida J.P."/>
            <person name="Ambrose K.D."/>
            <person name="Anderson F."/>
            <person name="Andrew R.W."/>
            <person name="Ashwell R.I.S."/>
            <person name="Aubin K."/>
            <person name="Babbage A.K."/>
            <person name="Bagguley C.L."/>
            <person name="Bailey J."/>
            <person name="Beasley H."/>
            <person name="Bethel G."/>
            <person name="Bird C.P."/>
            <person name="Bray-Allen S."/>
            <person name="Brown J.Y."/>
            <person name="Brown A.J."/>
            <person name="Buckley D."/>
            <person name="Burton J."/>
            <person name="Bye J."/>
            <person name="Carder C."/>
            <person name="Chapman J.C."/>
            <person name="Clark S.Y."/>
            <person name="Clarke G."/>
            <person name="Clee C."/>
            <person name="Cobley V."/>
            <person name="Collier R.E."/>
            <person name="Corby N."/>
            <person name="Coville G.J."/>
            <person name="Davies J."/>
            <person name="Deadman R."/>
            <person name="Dunn M."/>
            <person name="Earthrowl M."/>
            <person name="Ellington A.G."/>
            <person name="Errington H."/>
            <person name="Frankish A."/>
            <person name="Frankland J."/>
            <person name="French L."/>
            <person name="Garner P."/>
            <person name="Garnett J."/>
            <person name="Gay L."/>
            <person name="Ghori M.R.J."/>
            <person name="Gibson R."/>
            <person name="Gilby L.M."/>
            <person name="Gillett W."/>
            <person name="Glithero R.J."/>
            <person name="Grafham D.V."/>
            <person name="Griffiths C."/>
            <person name="Griffiths-Jones S."/>
            <person name="Grocock R."/>
            <person name="Hammond S."/>
            <person name="Harrison E.S.I."/>
            <person name="Hart E."/>
            <person name="Haugen E."/>
            <person name="Heath P.D."/>
            <person name="Holmes S."/>
            <person name="Holt K."/>
            <person name="Howden P.J."/>
            <person name="Hunt A.R."/>
            <person name="Hunt S.E."/>
            <person name="Hunter G."/>
            <person name="Isherwood J."/>
            <person name="James R."/>
            <person name="Johnson C."/>
            <person name="Johnson D."/>
            <person name="Joy A."/>
            <person name="Kay M."/>
            <person name="Kershaw J.K."/>
            <person name="Kibukawa M."/>
            <person name="Kimberley A.M."/>
            <person name="King A."/>
            <person name="Knights A.J."/>
            <person name="Lad H."/>
            <person name="Laird G."/>
            <person name="Lawlor S."/>
            <person name="Leongamornlert D.A."/>
            <person name="Lloyd D.M."/>
            <person name="Loveland J."/>
            <person name="Lovell J."/>
            <person name="Lush M.J."/>
            <person name="Lyne R."/>
            <person name="Martin S."/>
            <person name="Mashreghi-Mohammadi M."/>
            <person name="Matthews L."/>
            <person name="Matthews N.S.W."/>
            <person name="McLaren S."/>
            <person name="Milne S."/>
            <person name="Mistry S."/>
            <person name="Moore M.J.F."/>
            <person name="Nickerson T."/>
            <person name="O'Dell C.N."/>
            <person name="Oliver K."/>
            <person name="Palmeiri A."/>
            <person name="Palmer S.A."/>
            <person name="Parker A."/>
            <person name="Patel D."/>
            <person name="Pearce A.V."/>
            <person name="Peck A.I."/>
            <person name="Pelan S."/>
            <person name="Phelps K."/>
            <person name="Phillimore B.J."/>
            <person name="Plumb R."/>
            <person name="Rajan J."/>
            <person name="Raymond C."/>
            <person name="Rouse G."/>
            <person name="Saenphimmachak C."/>
            <person name="Sehra H.K."/>
            <person name="Sheridan E."/>
            <person name="Shownkeen R."/>
            <person name="Sims S."/>
            <person name="Skuce C.D."/>
            <person name="Smith M."/>
            <person name="Steward C."/>
            <person name="Subramanian S."/>
            <person name="Sycamore N."/>
            <person name="Tracey A."/>
            <person name="Tromans A."/>
            <person name="Van Helmond Z."/>
            <person name="Wall M."/>
            <person name="Wallis J.M."/>
            <person name="White S."/>
            <person name="Whitehead S.L."/>
            <person name="Wilkinson J.E."/>
            <person name="Willey D.L."/>
            <person name="Williams H."/>
            <person name="Wilming L."/>
            <person name="Wray P.W."/>
            <person name="Wu Z."/>
            <person name="Coulson A."/>
            <person name="Vaudin M."/>
            <person name="Sulston J.E."/>
            <person name="Durbin R.M."/>
            <person name="Hubbard T."/>
            <person name="Wooster R."/>
            <person name="Dunham I."/>
            <person name="Carter N.P."/>
            <person name="McVean G."/>
            <person name="Ross M.T."/>
            <person name="Harrow J."/>
            <person name="Olson M.V."/>
            <person name="Beck S."/>
            <person name="Rogers J."/>
            <person name="Bentley D.R."/>
        </authorList>
    </citation>
    <scope>NUCLEOTIDE SEQUENCE [LARGE SCALE GENOMIC DNA]</scope>
</reference>
<reference key="7">
    <citation type="submission" date="2005-09" db="EMBL/GenBank/DDBJ databases">
        <authorList>
            <person name="Mural R.J."/>
            <person name="Istrail S."/>
            <person name="Sutton G.G."/>
            <person name="Florea L."/>
            <person name="Halpern A.L."/>
            <person name="Mobarry C.M."/>
            <person name="Lippert R."/>
            <person name="Walenz B."/>
            <person name="Shatkay H."/>
            <person name="Dew I."/>
            <person name="Miller J.R."/>
            <person name="Flanigan M.J."/>
            <person name="Edwards N.J."/>
            <person name="Bolanos R."/>
            <person name="Fasulo D."/>
            <person name="Halldorsson B.V."/>
            <person name="Hannenhalli S."/>
            <person name="Turner R."/>
            <person name="Yooseph S."/>
            <person name="Lu F."/>
            <person name="Nusskern D.R."/>
            <person name="Shue B.C."/>
            <person name="Zheng X.H."/>
            <person name="Zhong F."/>
            <person name="Delcher A.L."/>
            <person name="Huson D.H."/>
            <person name="Kravitz S.A."/>
            <person name="Mouchard L."/>
            <person name="Reinert K."/>
            <person name="Remington K.A."/>
            <person name="Clark A.G."/>
            <person name="Waterman M.S."/>
            <person name="Eichler E.E."/>
            <person name="Adams M.D."/>
            <person name="Hunkapiller M.W."/>
            <person name="Myers E.W."/>
            <person name="Venter J.C."/>
        </authorList>
    </citation>
    <scope>NUCLEOTIDE SEQUENCE [LARGE SCALE GENOMIC DNA]</scope>
</reference>
<reference key="8">
    <citation type="journal article" date="2004" name="Genome Res.">
        <title>The status, quality, and expansion of the NIH full-length cDNA project: the Mammalian Gene Collection (MGC).</title>
        <authorList>
            <consortium name="The MGC Project Team"/>
        </authorList>
    </citation>
    <scope>NUCLEOTIDE SEQUENCE [LARGE SCALE MRNA] (ISOFORM 2)</scope>
    <source>
        <tissue>Lymph</tissue>
    </source>
</reference>
<reference key="9">
    <citation type="journal article" date="1994" name="Eur. J. Immunol.">
        <title>Soluble interleukin-6 receptors released from T cell or granulocyte/macrophage cell lines and human peripheral blood mononuclear cells are generated through an alternative splicing mechanism.</title>
        <authorList>
            <person name="Horiuchi S."/>
            <person name="Koyanagi Y."/>
            <person name="Zhou Y."/>
            <person name="Miyamoto H."/>
            <person name="Tanaka Y."/>
            <person name="Waki M."/>
            <person name="Matsumoto A."/>
            <person name="Yamamoto M."/>
            <person name="Yamamoto N."/>
        </authorList>
    </citation>
    <scope>NUCLEOTIDE SEQUENCE [MRNA] OF 313-365 (ISOFORM 2)</scope>
</reference>
<reference key="10">
    <citation type="journal article" date="1999" name="J. Biol. Chem.">
        <title>Disulfide bond structure and N-glycosylation sites of the extracellular domain of the human interleukin-6 receptor.</title>
        <authorList>
            <person name="Cole A.R."/>
            <person name="Hall N.E."/>
            <person name="Treutlein H.R."/>
            <person name="Eddes J.S."/>
            <person name="Reid G.E."/>
            <person name="Moritz R.L."/>
            <person name="Simpson R.J."/>
        </authorList>
    </citation>
    <scope>PARTIAL PROTEIN SEQUENCE</scope>
    <scope>GLYCOSYLATION AT ASN-55; ASN-93 AND ASN-221</scope>
    <scope>LACK OF GLYCOSYLATION AT ASN-245</scope>
    <scope>DISULFIDE BONDS</scope>
</reference>
<reference key="11">
    <citation type="journal article" date="1989" name="J. Exp. Med.">
        <title>Soluble cytokine receptors are present in normal human urine.</title>
        <authorList>
            <person name="Novick D."/>
            <person name="Engelmann H."/>
            <person name="Wallach D."/>
            <person name="Rubinstein M."/>
        </authorList>
    </citation>
    <scope>PROTEIN SEQUENCE OF 20-49</scope>
    <scope>SUBCELLULAR LOCATION</scope>
</reference>
<reference key="12">
    <citation type="journal article" date="1993" name="EMBO J.">
        <title>Structure-function analysis of human IL-6 receptor: dissociation of amino acid residues required for IL-6-binding and for IL-6 signal transduction through gp130.</title>
        <authorList>
            <person name="Yawata H."/>
            <person name="Yasukawa K."/>
            <person name="Natsuka S."/>
            <person name="Murakami M."/>
            <person name="Yamasaki K."/>
            <person name="Hibi M."/>
            <person name="Taga T."/>
            <person name="Kishimoto T."/>
        </authorList>
    </citation>
    <scope>MUTAGENESIS</scope>
</reference>
<reference key="13">
    <citation type="journal article" date="2000" name="J. Cell Sci.">
        <title>The cytoplasmic domain of the interleukin-6 receptor gp80 mediates its basolateral sorting in polarized Madin-Darby canine kidney cells.</title>
        <authorList>
            <person name="Martens A.S."/>
            <person name="Bode J.G."/>
            <person name="Heinrich P.C."/>
            <person name="Graeve L."/>
        </authorList>
    </citation>
    <scope>FUNCTION</scope>
</reference>
<reference key="14">
    <citation type="journal article" date="2003" name="Arthritis Rheum.">
        <title>Anti-interleukin-6 receptor antibody therapy reduces vascular endothelial growth factor production in rheumatoid arthritis.</title>
        <authorList>
            <person name="Nakahara H."/>
            <person name="Song J."/>
            <person name="Sugimoto M."/>
            <person name="Hagihara K."/>
            <person name="Kishimoto T."/>
            <person name="Yoshizaki K."/>
            <person name="Nishimoto N."/>
        </authorList>
    </citation>
    <scope>FUNCTION</scope>
</reference>
<reference key="15">
    <citation type="journal article" date="2005" name="Eur. J. Cell Biol.">
        <title>Increased association with detergent-resistant membranes/lipid rafts of apically targeted mutants of the interleukin-6 receptor gp80.</title>
        <authorList>
            <person name="Buk D.M."/>
            <person name="Renner O."/>
            <person name="Graeve L."/>
        </authorList>
    </citation>
    <scope>FUNCTION</scope>
    <scope>SUBCELLULAR LOCATION</scope>
</reference>
<reference key="16">
    <citation type="journal article" date="2011" name="J. Biol. Chem.">
        <title>Inhibition of classic signaling is a novel function of soluble glycoprotein 130 (sgp130), which is controlled by the ratio of interleukin 6 and soluble interleukin 6 receptor.</title>
        <authorList>
            <person name="Garbers C."/>
            <person name="Thaiss W."/>
            <person name="Jones G.W."/>
            <person name="Waetzig G.H."/>
            <person name="Lorenzen I."/>
            <person name="Guilhot F."/>
            <person name="Lissilaa R."/>
            <person name="Ferlin W.G."/>
            <person name="Groetzinger J."/>
            <person name="Jones S.A."/>
            <person name="Rose-John S."/>
            <person name="Scheller J."/>
        </authorList>
    </citation>
    <scope>FUNCTION</scope>
    <scope>ACTIVITY REGULATION</scope>
</reference>
<reference key="17">
    <citation type="journal article" date="2016" name="Cell Rep.">
        <title>Proteolytic Cleavage Governs Interleukin-11 Trans-signaling.</title>
        <authorList>
            <person name="Lokau J."/>
            <person name="Nitz R."/>
            <person name="Agthe M."/>
            <person name="Monhasery N."/>
            <person name="Aparicio-Siegmund S."/>
            <person name="Schumacher N."/>
            <person name="Wolf J."/>
            <person name="Moeller-Hackbarth K."/>
            <person name="Waetzig G.H."/>
            <person name="Groetzinger J."/>
            <person name="Mueller-Newen G."/>
            <person name="Rose-John S."/>
            <person name="Scheller J."/>
            <person name="Garbers C."/>
        </authorList>
    </citation>
    <scope>FUNCTION</scope>
    <scope>PROTEOLYTIC CLEAVAGE</scope>
</reference>
<reference key="18">
    <citation type="journal article" date="2017" name="Mol. Cell. Biol.">
        <title>SorLA in Interleukin-6 Signaling and Turnover.</title>
        <authorList>
            <person name="Larsen J.V."/>
            <person name="Petersen C.M."/>
        </authorList>
    </citation>
    <scope>FUNCTION</scope>
    <scope>INTERACTION WITH SORL1</scope>
</reference>
<reference key="19">
    <citation type="journal article" date="2017" name="PLoS Biol.">
        <title>Proteolytic Origin of the Soluble Human IL-6R In Vivo and a Decisive Role of N-Glycosylation.</title>
        <authorList>
            <person name="Riethmueller S."/>
            <person name="Somasundaram P."/>
            <person name="Ehlers J.C."/>
            <person name="Hung C.W."/>
            <person name="Flynn C.M."/>
            <person name="Lokau J."/>
            <person name="Agthe M."/>
            <person name="Duesterhoeft S."/>
            <person name="Zhu Y."/>
            <person name="Groetzinger J."/>
            <person name="Lorenzen I."/>
            <person name="Koudelka T."/>
            <person name="Yamamoto K."/>
            <person name="Pickhinke U."/>
            <person name="Wichert R."/>
            <person name="Becker-Pauly C."/>
            <person name="Raedisch M."/>
            <person name="Albrecht A."/>
            <person name="Hessefort M."/>
            <person name="Stahnke D."/>
            <person name="Unverzagt C."/>
            <person name="Rose-John S."/>
            <person name="Tholey A."/>
            <person name="Garbers C."/>
        </authorList>
    </citation>
    <scope>FUNCTION</scope>
    <scope>PROTEOLYTIC CLEAVAGE</scope>
    <scope>TISSUE SPECIFICITY (ISOFORM 2)</scope>
    <scope>GLYCOSYLATION AT ASN-55; ASN-93; ASN-221; ASN-245; ASN-350 AND THR-352</scope>
    <scope>MUTAGENESIS OF ASN-55; THR-57; ASN-93; ASN-221; ASN-245; ASN-350; THR-352; 355-PRO-VAL-356; PRO-355 AND VAL-356</scope>
    <scope>CHARACTERIZATION OF VARIANT ALA-358</scope>
    <scope>SUBCELLULAR LOCATION</scope>
</reference>
<reference key="20">
    <citation type="journal article" date="2019" name="Immunity">
        <title>Targeting Interleukin-6 Signaling in Clinic.</title>
        <authorList>
            <person name="Kang S."/>
            <person name="Tanaka T."/>
            <person name="Narazaki M."/>
            <person name="Kishimoto T."/>
        </authorList>
    </citation>
    <scope>REVIEW ON FUNCTION</scope>
</reference>
<reference key="21">
    <citation type="journal article" date="2002" name="Proc. Natl. Acad. Sci. U.S.A.">
        <title>Structure of the extracellular domains of the human interleukin-6 receptor alpha-chain.</title>
        <authorList>
            <person name="Varghese J.N."/>
            <person name="Moritz R.L."/>
            <person name="Lou M.-Z."/>
            <person name="Van Donkelaar A."/>
            <person name="Ji H."/>
            <person name="Ivancic N."/>
            <person name="Branson K.M."/>
            <person name="Hall N.E."/>
            <person name="Simpson R.J."/>
        </authorList>
    </citation>
    <scope>X-RAY CRYSTALLOGRAPHY (2.4 ANGSTROMS) OF 20-344</scope>
</reference>
<reference evidence="28" key="22">
    <citation type="journal article" date="2003" name="Science">
        <title>Hexameric structure and assembly of the interleukin-6/IL-6 alpha-receptor/gp130 complex.</title>
        <authorList>
            <person name="Boulanger M.J."/>
            <person name="Chow D.C."/>
            <person name="Brevnova E.E."/>
            <person name="Garcia K.C."/>
        </authorList>
    </citation>
    <scope>X-RAY CRYSTALLOGRAPHY (3.65 ANGSTROMS) OF 115-315 IN COMPLEX WITH IL6 AND IL6ST</scope>
    <scope>SUBUNIT</scope>
</reference>
<reference key="23">
    <citation type="journal article" date="2007" name="Am. J. Hum. Genet.">
        <title>Admixture mapping of an allele affecting interleukin 6 soluble receptor and interleukin 6 levels.</title>
        <authorList>
            <consortium name="Health, Aging and Body Composition (Health ABC) Study"/>
            <person name="Reich D."/>
            <person name="Patterson N."/>
            <person name="Ramesh V."/>
            <person name="De Jager P.L."/>
            <person name="McDonald G.J."/>
            <person name="Tandon A."/>
            <person name="Choy E."/>
            <person name="Hu D."/>
            <person name="Tamraz B."/>
            <person name="Pawlikowska L."/>
            <person name="Wassel-Fyr C."/>
            <person name="Huntsman S."/>
            <person name="Waliszewska A."/>
            <person name="Rossin E."/>
            <person name="Li R."/>
            <person name="Garcia M."/>
            <person name="Reiner A."/>
            <person name="Ferrell R."/>
            <person name="Cummings S."/>
            <person name="Kwok P.Y."/>
            <person name="Harris T."/>
            <person name="Zmuda J.M."/>
            <person name="Ziv E."/>
        </authorList>
    </citation>
    <scope>POLYMORPHISM</scope>
    <scope>VARIANT ALA-358</scope>
    <scope>ASSOCIATION OF VARIANT ALA-358 WITH IL6 AND SOLUBLE IL6R SERUM LEVELS</scope>
</reference>
<reference key="24">
    <citation type="journal article" date="2019" name="J. Exp. Med.">
        <title>Loss of the interleukin-6 receptor causes immunodeficiency, atopy, and abnormal inflammatory responses.</title>
        <authorList>
            <person name="Spencer S."/>
            <person name="Koestel Bal S."/>
            <person name="Egner W."/>
            <person name="Lango Allen H."/>
            <person name="Raza S.I."/>
            <person name="Ma C.A."/>
            <person name="Guerel M."/>
            <person name="Zhang Y."/>
            <person name="Sun G."/>
            <person name="Sabroe R.A."/>
            <person name="Greene D."/>
            <person name="Rae W."/>
            <person name="Shahin T."/>
            <person name="Kania K."/>
            <person name="Ardy R.C."/>
            <person name="Thian M."/>
            <person name="Staples E."/>
            <person name="Pecchia-Bekkum A."/>
            <person name="Worrall W.P.M."/>
            <person name="Stephens J."/>
            <person name="Brown M."/>
            <person name="Tuna S."/>
            <person name="York M."/>
            <person name="Shackley F."/>
            <person name="Kerrin D."/>
            <person name="Sargur R."/>
            <person name="Condliffe A."/>
            <person name="Tipu H.N."/>
            <person name="Kuehn H.S."/>
            <person name="Rosenzweig S.D."/>
            <person name="Turro E."/>
            <person name="Tavare S."/>
            <person name="Thrasher A.J."/>
            <person name="Jodrell D.I."/>
            <person name="Smith K.G.C."/>
            <person name="Boztug K."/>
            <person name="Milner J.D."/>
            <person name="Thaventhiran J.E.D."/>
        </authorList>
    </citation>
    <scope>INVOLVEMENT IN HIES5</scope>
    <scope>VARIANTS HIES5 ASN-279 AND PRO-280</scope>
    <scope>CHARACTERIZATION OF VARIANTS HIES5 ASN-279 AND PRO-280</scope>
    <scope>FUNCTION</scope>
</reference>
<name>IL6RA_HUMAN</name>
<sequence>MLAVGCALLAALLAAPGAALAPRRCPAQEVARGVLTSLPGDSVTLTCPGVEPEDNATVHWVLRKPAAGSHPSRWAGMGRRLLLRSVQLHDSGNYSCYRAGRPAGTVHLLVDVPPEEPQLSCFRKSPLSNVVCEWGPRSTPSLTTKAVLLVRKFQNSPAEDFQEPCQYSQESQKFSCQLAVPEGDSSFYIVSMCVASSVGSKFSKTQTFQGCGILQPDPPANITVTAVARNPRWLSVTWQDPHSWNSSFYRLRFELRYRAERSKTFTTWMVKDLQHHCVIHDAWSGLRHVVQLRAQEEFGQGEWSEWSPEAMGTPWTESRSPPAENEVSTPMQALTTNKDDDNILFRDSANATSLPVQDSSSVPLPTFLVAGGSLAFGTLLCIAIVLRFKKTWKLRALKEGKTSMHPPYSLGQLVPERPRPTPVLVPLISPPVSPSSLGSDNTSSHNRPDARDPRSPYDISNTDYFFPR</sequence>
<dbReference type="EMBL" id="X12830">
    <property type="protein sequence ID" value="CAA31312.1"/>
    <property type="molecule type" value="mRNA"/>
</dbReference>
<dbReference type="EMBL" id="X58298">
    <property type="protein sequence ID" value="CAA41231.1"/>
    <property type="molecule type" value="mRNA"/>
</dbReference>
<dbReference type="EMBL" id="AK293013">
    <property type="protein sequence ID" value="BAF85702.1"/>
    <property type="molecule type" value="mRNA"/>
</dbReference>
<dbReference type="EMBL" id="AK312730">
    <property type="protein sequence ID" value="BAG35601.1"/>
    <property type="molecule type" value="mRNA"/>
</dbReference>
<dbReference type="EMBL" id="AK223582">
    <property type="protein sequence ID" value="BAD97302.1"/>
    <property type="molecule type" value="mRNA"/>
</dbReference>
<dbReference type="EMBL" id="AL162591">
    <property type="status" value="NOT_ANNOTATED_CDS"/>
    <property type="molecule type" value="Genomic_DNA"/>
</dbReference>
<dbReference type="EMBL" id="CH471121">
    <property type="protein sequence ID" value="EAW53200.1"/>
    <property type="molecule type" value="Genomic_DNA"/>
</dbReference>
<dbReference type="EMBL" id="BC089410">
    <property type="protein sequence ID" value="AAH89410.1"/>
    <property type="molecule type" value="mRNA"/>
</dbReference>
<dbReference type="EMBL" id="S72848">
    <property type="protein sequence ID" value="AAC60635.1"/>
    <property type="molecule type" value="mRNA"/>
</dbReference>
<dbReference type="CCDS" id="CCDS1067.1">
    <molecule id="P08887-1"/>
</dbReference>
<dbReference type="CCDS" id="CCDS1068.1">
    <molecule id="P08887-2"/>
</dbReference>
<dbReference type="PIR" id="A41242">
    <property type="entry name" value="A41242"/>
</dbReference>
<dbReference type="RefSeq" id="NP_000556.1">
    <molecule id="P08887-1"/>
    <property type="nucleotide sequence ID" value="NM_000565.4"/>
</dbReference>
<dbReference type="RefSeq" id="NP_001193795.1">
    <property type="nucleotide sequence ID" value="NM_001206866.1"/>
</dbReference>
<dbReference type="RefSeq" id="NP_852004.1">
    <molecule id="P08887-2"/>
    <property type="nucleotide sequence ID" value="NM_181359.3"/>
</dbReference>
<dbReference type="PDB" id="1N26">
    <property type="method" value="X-ray"/>
    <property type="resolution" value="2.40 A"/>
    <property type="chains" value="A=20-344"/>
</dbReference>
<dbReference type="PDB" id="1P9M">
    <property type="method" value="X-ray"/>
    <property type="resolution" value="3.65 A"/>
    <property type="chains" value="C=115-315"/>
</dbReference>
<dbReference type="PDB" id="2ARW">
    <property type="method" value="NMR"/>
    <property type="chains" value="A=212-336"/>
</dbReference>
<dbReference type="PDB" id="5FUC">
    <property type="method" value="X-ray"/>
    <property type="resolution" value="2.70 A"/>
    <property type="chains" value="C/D=111-322"/>
</dbReference>
<dbReference type="PDB" id="7DC8">
    <property type="method" value="X-ray"/>
    <property type="resolution" value="2.76 A"/>
    <property type="chains" value="C/F=111-320"/>
</dbReference>
<dbReference type="PDB" id="8D82">
    <property type="method" value="EM"/>
    <property type="resolution" value="3.22 A"/>
    <property type="chains" value="C/G=20-331"/>
</dbReference>
<dbReference type="PDB" id="8IOW">
    <property type="method" value="EM"/>
    <property type="resolution" value="3.20 A"/>
    <property type="chains" value="D2/I=1-355"/>
</dbReference>
<dbReference type="PDB" id="8QY5">
    <property type="method" value="EM"/>
    <property type="resolution" value="3.10 A"/>
    <property type="chains" value="C/F=1-468"/>
</dbReference>
<dbReference type="PDB" id="8QY6">
    <property type="method" value="EM"/>
    <property type="resolution" value="3.16 A"/>
    <property type="chains" value="C/F=1-468"/>
</dbReference>
<dbReference type="PDBsum" id="1N26"/>
<dbReference type="PDBsum" id="1P9M"/>
<dbReference type="PDBsum" id="2ARW"/>
<dbReference type="PDBsum" id="5FUC"/>
<dbReference type="PDBsum" id="7DC8"/>
<dbReference type="PDBsum" id="8D82"/>
<dbReference type="PDBsum" id="8IOW"/>
<dbReference type="PDBsum" id="8QY5"/>
<dbReference type="PDBsum" id="8QY6"/>
<dbReference type="BMRB" id="P08887"/>
<dbReference type="EMDB" id="EMD-18742"/>
<dbReference type="EMDB" id="EMD-18743"/>
<dbReference type="EMDB" id="EMD-27244"/>
<dbReference type="EMDB" id="EMD-35627"/>
<dbReference type="EMDB" id="EMD-36003"/>
<dbReference type="SASBDB" id="P08887"/>
<dbReference type="SMR" id="P08887"/>
<dbReference type="BioGRID" id="109784">
    <property type="interactions" value="25"/>
</dbReference>
<dbReference type="ComplexPortal" id="CPX-623">
    <property type="entry name" value="Interleukin 6-mIL6R-mIL6ST receptor-ligand classical signalling complex"/>
</dbReference>
<dbReference type="ComplexPortal" id="CPX-8967">
    <property type="entry name" value="Interleukin-6 sIL6R-mIL6ST receptor-ligand trans-signalling complex"/>
</dbReference>
<dbReference type="ComplexPortal" id="CPX-8968">
    <molecule id="P08887-1"/>
    <property type="entry name" value="Membrane bound interleukin-6 mIL6R receptor-ligand cluster-signalling complex"/>
</dbReference>
<dbReference type="ComplexPortal" id="CPX-8969">
    <property type="entry name" value="Interleukin-6 sIL6R-sIL6ST buffering receptor-ligand complex"/>
</dbReference>
<dbReference type="CORUM" id="P08887"/>
<dbReference type="DIP" id="DIP-162N"/>
<dbReference type="ELM" id="P08887"/>
<dbReference type="FunCoup" id="P08887">
    <property type="interactions" value="842"/>
</dbReference>
<dbReference type="IntAct" id="P08887">
    <property type="interactions" value="19"/>
</dbReference>
<dbReference type="MINT" id="P08887"/>
<dbReference type="STRING" id="9606.ENSP00000357470"/>
<dbReference type="ChEMBL" id="CHEMBL2364155"/>
<dbReference type="DrugBank" id="DB11767">
    <property type="generic name" value="Sarilumab"/>
</dbReference>
<dbReference type="DrugBank" id="DB15762">
    <property type="generic name" value="Satralizumab"/>
</dbReference>
<dbReference type="DrugBank" id="DB06273">
    <property type="generic name" value="Tocilizumab"/>
</dbReference>
<dbReference type="DrugCentral" id="P08887"/>
<dbReference type="GuidetoPHARMACOLOGY" id="1708"/>
<dbReference type="GlyCosmos" id="P08887">
    <property type="glycosylation" value="8 sites, 2 glycans"/>
</dbReference>
<dbReference type="GlyGen" id="P08887">
    <property type="glycosylation" value="13 sites, 1 N-linked glycan (1 site), 4 O-linked glycans (4 sites)"/>
</dbReference>
<dbReference type="iPTMnet" id="P08887"/>
<dbReference type="PhosphoSitePlus" id="P08887"/>
<dbReference type="BioMuta" id="IL6R"/>
<dbReference type="DMDM" id="124343"/>
<dbReference type="MassIVE" id="P08887"/>
<dbReference type="PaxDb" id="9606-ENSP00000357470"/>
<dbReference type="PeptideAtlas" id="P08887"/>
<dbReference type="ProteomicsDB" id="52171">
    <molecule id="P08887-1"/>
</dbReference>
<dbReference type="ProteomicsDB" id="52172">
    <molecule id="P08887-2"/>
</dbReference>
<dbReference type="ABCD" id="P08887">
    <property type="antibodies" value="138 sequenced antibodies"/>
</dbReference>
<dbReference type="Antibodypedia" id="20397">
    <property type="antibodies" value="1118 antibodies from 43 providers"/>
</dbReference>
<dbReference type="CPTC" id="P08887">
    <property type="antibodies" value="1 antibody"/>
</dbReference>
<dbReference type="DNASU" id="3570"/>
<dbReference type="Ensembl" id="ENST00000344086.8">
    <molecule id="P08887-2"/>
    <property type="protein sequence ID" value="ENSP00000340589.4"/>
    <property type="gene ID" value="ENSG00000160712.13"/>
</dbReference>
<dbReference type="Ensembl" id="ENST00000368485.8">
    <molecule id="P08887-1"/>
    <property type="protein sequence ID" value="ENSP00000357470.3"/>
    <property type="gene ID" value="ENSG00000160712.13"/>
</dbReference>
<dbReference type="GeneID" id="3570"/>
<dbReference type="KEGG" id="hsa:3570"/>
<dbReference type="MANE-Select" id="ENST00000368485.8">
    <property type="protein sequence ID" value="ENSP00000357470.3"/>
    <property type="RefSeq nucleotide sequence ID" value="NM_000565.4"/>
    <property type="RefSeq protein sequence ID" value="NP_000556.1"/>
</dbReference>
<dbReference type="UCSC" id="uc001fez.2">
    <molecule id="P08887-1"/>
    <property type="organism name" value="human"/>
</dbReference>
<dbReference type="AGR" id="HGNC:6019"/>
<dbReference type="CTD" id="3570"/>
<dbReference type="DisGeNET" id="3570"/>
<dbReference type="GeneCards" id="IL6R"/>
<dbReference type="HGNC" id="HGNC:6019">
    <property type="gene designation" value="IL6R"/>
</dbReference>
<dbReference type="HPA" id="ENSG00000160712">
    <property type="expression patterns" value="Tissue enhanced (liver, skeletal muscle)"/>
</dbReference>
<dbReference type="MalaCards" id="IL6R"/>
<dbReference type="MIM" id="147880">
    <property type="type" value="gene"/>
</dbReference>
<dbReference type="MIM" id="614689">
    <property type="type" value="phenotype"/>
</dbReference>
<dbReference type="MIM" id="614752">
    <property type="type" value="phenotype"/>
</dbReference>
<dbReference type="MIM" id="618944">
    <property type="type" value="phenotype"/>
</dbReference>
<dbReference type="neXtProt" id="NX_P08887"/>
<dbReference type="OpenTargets" id="ENSG00000160712"/>
<dbReference type="Orphanet" id="656326">
    <property type="disease" value="Autosomal recessive combined immunodeficiency due to IL6R deficiency"/>
</dbReference>
<dbReference type="PharmGKB" id="PA29835"/>
<dbReference type="VEuPathDB" id="HostDB:ENSG00000160712"/>
<dbReference type="eggNOG" id="ENOG502RY0M">
    <property type="taxonomic scope" value="Eukaryota"/>
</dbReference>
<dbReference type="GeneTree" id="ENSGT00940000161919"/>
<dbReference type="HOGENOM" id="CLU_051451_0_0_1"/>
<dbReference type="InParanoid" id="P08887"/>
<dbReference type="OrthoDB" id="8634471at2759"/>
<dbReference type="PAN-GO" id="P08887">
    <property type="GO annotations" value="9 GO annotations based on evolutionary models"/>
</dbReference>
<dbReference type="PhylomeDB" id="P08887"/>
<dbReference type="TreeFam" id="TF331210"/>
<dbReference type="PathwayCommons" id="P08887"/>
<dbReference type="Reactome" id="R-HSA-1059683">
    <property type="pathway name" value="Interleukin-6 signaling"/>
</dbReference>
<dbReference type="Reactome" id="R-HSA-110056">
    <property type="pathway name" value="MAPK3 (ERK1) activation"/>
</dbReference>
<dbReference type="Reactome" id="R-HSA-112411">
    <property type="pathway name" value="MAPK1 (ERK2) activation"/>
</dbReference>
<dbReference type="Reactome" id="R-HSA-6785807">
    <property type="pathway name" value="Interleukin-4 and Interleukin-13 signaling"/>
</dbReference>
<dbReference type="Reactome" id="R-HSA-9616222">
    <property type="pathway name" value="Transcriptional regulation of granulopoiesis"/>
</dbReference>
<dbReference type="Reactome" id="R-HSA-9679191">
    <property type="pathway name" value="Potential therapeutics for SARS"/>
</dbReference>
<dbReference type="SignaLink" id="P08887"/>
<dbReference type="SIGNOR" id="P08887"/>
<dbReference type="BioGRID-ORCS" id="3570">
    <property type="hits" value="19 hits in 1172 CRISPR screens"/>
</dbReference>
<dbReference type="ChiTaRS" id="IL6R">
    <property type="organism name" value="human"/>
</dbReference>
<dbReference type="EvolutionaryTrace" id="P08887"/>
<dbReference type="GeneWiki" id="Interleukin-6_receptor"/>
<dbReference type="GenomeRNAi" id="3570"/>
<dbReference type="Pharos" id="P08887">
    <property type="development level" value="Tclin"/>
</dbReference>
<dbReference type="PRO" id="PR:P08887"/>
<dbReference type="Proteomes" id="UP000005640">
    <property type="component" value="Chromosome 1"/>
</dbReference>
<dbReference type="RNAct" id="P08887">
    <property type="molecule type" value="protein"/>
</dbReference>
<dbReference type="Bgee" id="ENSG00000160712">
    <property type="expression patterns" value="Expressed in blood and 193 other cell types or tissues"/>
</dbReference>
<dbReference type="ExpressionAtlas" id="P08887">
    <property type="expression patterns" value="baseline and differential"/>
</dbReference>
<dbReference type="GO" id="GO:0016324">
    <property type="term" value="C:apical plasma membrane"/>
    <property type="evidence" value="ECO:0000314"/>
    <property type="project" value="BHF-UCL"/>
</dbReference>
<dbReference type="GO" id="GO:0070110">
    <property type="term" value="C:ciliary neurotrophic factor receptor complex"/>
    <property type="evidence" value="ECO:0000314"/>
    <property type="project" value="BHF-UCL"/>
</dbReference>
<dbReference type="GO" id="GO:0009897">
    <property type="term" value="C:external side of plasma membrane"/>
    <property type="evidence" value="ECO:0000318"/>
    <property type="project" value="GO_Central"/>
</dbReference>
<dbReference type="GO" id="GO:0005576">
    <property type="term" value="C:extracellular region"/>
    <property type="evidence" value="ECO:0000314"/>
    <property type="project" value="UniProtKB"/>
</dbReference>
<dbReference type="GO" id="GO:0005615">
    <property type="term" value="C:extracellular space"/>
    <property type="evidence" value="ECO:0000314"/>
    <property type="project" value="BHF-UCL"/>
</dbReference>
<dbReference type="GO" id="GO:0005896">
    <property type="term" value="C:interleukin-6 receptor complex"/>
    <property type="evidence" value="ECO:0000314"/>
    <property type="project" value="BHF-UCL"/>
</dbReference>
<dbReference type="GO" id="GO:0005886">
    <property type="term" value="C:plasma membrane"/>
    <property type="evidence" value="ECO:0000314"/>
    <property type="project" value="UniProt"/>
</dbReference>
<dbReference type="GO" id="GO:0043235">
    <property type="term" value="C:receptor complex"/>
    <property type="evidence" value="ECO:0000318"/>
    <property type="project" value="GO_Central"/>
</dbReference>
<dbReference type="GO" id="GO:0070119">
    <property type="term" value="F:ciliary neurotrophic factor binding"/>
    <property type="evidence" value="ECO:0000353"/>
    <property type="project" value="BHF-UCL"/>
</dbReference>
<dbReference type="GO" id="GO:0004896">
    <property type="term" value="F:cytokine receptor activity"/>
    <property type="evidence" value="ECO:0000314"/>
    <property type="project" value="UniProt"/>
</dbReference>
<dbReference type="GO" id="GO:0019899">
    <property type="term" value="F:enzyme binding"/>
    <property type="evidence" value="ECO:0000353"/>
    <property type="project" value="UniProtKB"/>
</dbReference>
<dbReference type="GO" id="GO:0019970">
    <property type="term" value="F:interleukin-11 binding"/>
    <property type="evidence" value="ECO:0000318"/>
    <property type="project" value="GO_Central"/>
</dbReference>
<dbReference type="GO" id="GO:0004921">
    <property type="term" value="F:interleukin-11 receptor activity"/>
    <property type="evidence" value="ECO:0000318"/>
    <property type="project" value="GO_Central"/>
</dbReference>
<dbReference type="GO" id="GO:0019981">
    <property type="term" value="F:interleukin-6 binding"/>
    <property type="evidence" value="ECO:0000353"/>
    <property type="project" value="BHF-UCL"/>
</dbReference>
<dbReference type="GO" id="GO:0004915">
    <property type="term" value="F:interleukin-6 receptor activity"/>
    <property type="evidence" value="ECO:0007669"/>
    <property type="project" value="Ensembl"/>
</dbReference>
<dbReference type="GO" id="GO:0042803">
    <property type="term" value="F:protein homodimerization activity"/>
    <property type="evidence" value="ECO:0000353"/>
    <property type="project" value="BHF-UCL"/>
</dbReference>
<dbReference type="GO" id="GO:0006953">
    <property type="term" value="P:acute-phase response"/>
    <property type="evidence" value="ECO:0000304"/>
    <property type="project" value="BHF-UCL"/>
</dbReference>
<dbReference type="GO" id="GO:0097696">
    <property type="term" value="P:cell surface receptor signaling pathway via STAT"/>
    <property type="evidence" value="ECO:0000315"/>
    <property type="project" value="BHF-UCL"/>
</dbReference>
<dbReference type="GO" id="GO:0070120">
    <property type="term" value="P:ciliary neurotrophic factor-mediated signaling pathway"/>
    <property type="evidence" value="ECO:0000315"/>
    <property type="project" value="BHF-UCL"/>
</dbReference>
<dbReference type="GO" id="GO:0019221">
    <property type="term" value="P:cytokine-mediated signaling pathway"/>
    <property type="evidence" value="ECO:0000314"/>
    <property type="project" value="BHF-UCL"/>
</dbReference>
<dbReference type="GO" id="GO:0050829">
    <property type="term" value="P:defense response to Gram-negative bacterium"/>
    <property type="evidence" value="ECO:0000304"/>
    <property type="project" value="BHF-UCL"/>
</dbReference>
<dbReference type="GO" id="GO:0050830">
    <property type="term" value="P:defense response to Gram-positive bacterium"/>
    <property type="evidence" value="ECO:0000303"/>
    <property type="project" value="BHF-UCL"/>
</dbReference>
<dbReference type="GO" id="GO:0031018">
    <property type="term" value="P:endocrine pancreas development"/>
    <property type="evidence" value="ECO:0000315"/>
    <property type="project" value="BHF-UCL"/>
</dbReference>
<dbReference type="GO" id="GO:0097191">
    <property type="term" value="P:extrinsic apoptotic signaling pathway"/>
    <property type="evidence" value="ECO:0000304"/>
    <property type="project" value="BHF-UCL"/>
</dbReference>
<dbReference type="GO" id="GO:0002384">
    <property type="term" value="P:hepatic immune response"/>
    <property type="evidence" value="ECO:0000304"/>
    <property type="project" value="BHF-UCL"/>
</dbReference>
<dbReference type="GO" id="GO:0070102">
    <property type="term" value="P:interleukin-6-mediated signaling pathway"/>
    <property type="evidence" value="ECO:0000314"/>
    <property type="project" value="BHF-UCL"/>
</dbReference>
<dbReference type="GO" id="GO:0002548">
    <property type="term" value="P:monocyte chemotaxis"/>
    <property type="evidence" value="ECO:0000305"/>
    <property type="project" value="BHF-UCL"/>
</dbReference>
<dbReference type="GO" id="GO:0032966">
    <property type="term" value="P:negative regulation of collagen biosynthetic process"/>
    <property type="evidence" value="ECO:0000314"/>
    <property type="project" value="BHF-UCL"/>
</dbReference>
<dbReference type="GO" id="GO:0032717">
    <property type="term" value="P:negative regulation of interleukin-8 production"/>
    <property type="evidence" value="ECO:0000303"/>
    <property type="project" value="BHF-UCL"/>
</dbReference>
<dbReference type="GO" id="GO:0002446">
    <property type="term" value="P:neutrophil mediated immunity"/>
    <property type="evidence" value="ECO:0000304"/>
    <property type="project" value="BHF-UCL"/>
</dbReference>
<dbReference type="GO" id="GO:0008284">
    <property type="term" value="P:positive regulation of cell population proliferation"/>
    <property type="evidence" value="ECO:0000314"/>
    <property type="project" value="BHF-UCL"/>
</dbReference>
<dbReference type="GO" id="GO:0032722">
    <property type="term" value="P:positive regulation of chemokine production"/>
    <property type="evidence" value="ECO:0000314"/>
    <property type="project" value="BHF-UCL"/>
</dbReference>
<dbReference type="GO" id="GO:0072126">
    <property type="term" value="P:positive regulation of glomerular mesangial cell proliferation"/>
    <property type="evidence" value="ECO:0000315"/>
    <property type="project" value="ARUK-UCL"/>
</dbReference>
<dbReference type="GO" id="GO:0032755">
    <property type="term" value="P:positive regulation of interleukin-6 production"/>
    <property type="evidence" value="ECO:0000314"/>
    <property type="project" value="BHF-UCL"/>
</dbReference>
<dbReference type="GO" id="GO:0002690">
    <property type="term" value="P:positive regulation of leukocyte chemotaxis"/>
    <property type="evidence" value="ECO:0000304"/>
    <property type="project" value="BHF-UCL"/>
</dbReference>
<dbReference type="GO" id="GO:0043410">
    <property type="term" value="P:positive regulation of MAPK cascade"/>
    <property type="evidence" value="ECO:0000314"/>
    <property type="project" value="BHF-UCL"/>
</dbReference>
<dbReference type="GO" id="GO:0045669">
    <property type="term" value="P:positive regulation of osteoblast differentiation"/>
    <property type="evidence" value="ECO:0000304"/>
    <property type="project" value="BHF-UCL"/>
</dbReference>
<dbReference type="GO" id="GO:0048661">
    <property type="term" value="P:positive regulation of smooth muscle cell proliferation"/>
    <property type="evidence" value="ECO:0000314"/>
    <property type="project" value="BHF-UCL"/>
</dbReference>
<dbReference type="GO" id="GO:0034097">
    <property type="term" value="P:response to cytokine"/>
    <property type="evidence" value="ECO:0000314"/>
    <property type="project" value="BHF-UCL"/>
</dbReference>
<dbReference type="GO" id="GO:0072540">
    <property type="term" value="P:T-helper 17 cell lineage commitment"/>
    <property type="evidence" value="ECO:0000250"/>
    <property type="project" value="UniProt"/>
</dbReference>
<dbReference type="GO" id="GO:0010573">
    <property type="term" value="P:vascular endothelial growth factor production"/>
    <property type="evidence" value="ECO:0000314"/>
    <property type="project" value="UniProtKB"/>
</dbReference>
<dbReference type="CDD" id="cd00063">
    <property type="entry name" value="FN3"/>
    <property type="match status" value="1"/>
</dbReference>
<dbReference type="CDD" id="cd20939">
    <property type="entry name" value="IgC2_D1_IL-6RA"/>
    <property type="match status" value="1"/>
</dbReference>
<dbReference type="FunFam" id="2.60.40.10:FF:000136">
    <property type="entry name" value="Ciliary neurotrophic factor receptor alpha"/>
    <property type="match status" value="1"/>
</dbReference>
<dbReference type="FunFam" id="2.60.40.10:FF:001045">
    <property type="entry name" value="Interleukin 6 receptor"/>
    <property type="match status" value="1"/>
</dbReference>
<dbReference type="FunFam" id="2.60.40.10:FF:000886">
    <property type="entry name" value="Interleukin-6 receptor subunit alpha"/>
    <property type="match status" value="1"/>
</dbReference>
<dbReference type="Gene3D" id="2.60.40.10">
    <property type="entry name" value="Immunoglobulins"/>
    <property type="match status" value="3"/>
</dbReference>
<dbReference type="InterPro" id="IPR003961">
    <property type="entry name" value="FN3_dom"/>
</dbReference>
<dbReference type="InterPro" id="IPR036116">
    <property type="entry name" value="FN3_sf"/>
</dbReference>
<dbReference type="InterPro" id="IPR003530">
    <property type="entry name" value="Hematopoietin_rcpt_L_F3_CS"/>
</dbReference>
<dbReference type="InterPro" id="IPR007110">
    <property type="entry name" value="Ig-like_dom"/>
</dbReference>
<dbReference type="InterPro" id="IPR036179">
    <property type="entry name" value="Ig-like_dom_sf"/>
</dbReference>
<dbReference type="InterPro" id="IPR013783">
    <property type="entry name" value="Ig-like_fold"/>
</dbReference>
<dbReference type="InterPro" id="IPR003599">
    <property type="entry name" value="Ig_sub"/>
</dbReference>
<dbReference type="InterPro" id="IPR003598">
    <property type="entry name" value="Ig_sub2"/>
</dbReference>
<dbReference type="InterPro" id="IPR013151">
    <property type="entry name" value="Immunoglobulin_dom"/>
</dbReference>
<dbReference type="InterPro" id="IPR015321">
    <property type="entry name" value="TypeI_recpt_CBD"/>
</dbReference>
<dbReference type="PANTHER" id="PTHR23037">
    <property type="entry name" value="CYTOKINE RECEPTOR"/>
    <property type="match status" value="1"/>
</dbReference>
<dbReference type="PANTHER" id="PTHR23037:SF22">
    <property type="entry name" value="CYTOKINE RECEPTOR COMMON SUBUNIT BETA"/>
    <property type="match status" value="1"/>
</dbReference>
<dbReference type="Pfam" id="PF00047">
    <property type="entry name" value="ig"/>
    <property type="match status" value="1"/>
</dbReference>
<dbReference type="Pfam" id="PF09240">
    <property type="entry name" value="IL6Ra-bind"/>
    <property type="match status" value="1"/>
</dbReference>
<dbReference type="SMART" id="SM00060">
    <property type="entry name" value="FN3"/>
    <property type="match status" value="1"/>
</dbReference>
<dbReference type="SMART" id="SM00409">
    <property type="entry name" value="IG"/>
    <property type="match status" value="1"/>
</dbReference>
<dbReference type="SMART" id="SM00408">
    <property type="entry name" value="IGc2"/>
    <property type="match status" value="1"/>
</dbReference>
<dbReference type="SUPFAM" id="SSF49265">
    <property type="entry name" value="Fibronectin type III"/>
    <property type="match status" value="2"/>
</dbReference>
<dbReference type="SUPFAM" id="SSF48726">
    <property type="entry name" value="Immunoglobulin"/>
    <property type="match status" value="1"/>
</dbReference>
<dbReference type="PROSITE" id="PS50853">
    <property type="entry name" value="FN3"/>
    <property type="match status" value="2"/>
</dbReference>
<dbReference type="PROSITE" id="PS01354">
    <property type="entry name" value="HEMATOPO_REC_L_F3"/>
    <property type="match status" value="1"/>
</dbReference>
<dbReference type="PROSITE" id="PS50835">
    <property type="entry name" value="IG_LIKE"/>
    <property type="match status" value="1"/>
</dbReference>
<gene>
    <name evidence="27" type="primary">IL6R</name>
</gene>
<keyword id="KW-0002">3D-structure</keyword>
<keyword id="KW-0025">Alternative splicing</keyword>
<keyword id="KW-1003">Cell membrane</keyword>
<keyword id="KW-0903">Direct protein sequencing</keyword>
<keyword id="KW-1015">Disulfide bond</keyword>
<keyword id="KW-0325">Glycoprotein</keyword>
<keyword id="KW-0393">Immunoglobulin domain</keyword>
<keyword id="KW-0472">Membrane</keyword>
<keyword id="KW-1267">Proteomics identification</keyword>
<keyword id="KW-0675">Receptor</keyword>
<keyword id="KW-1185">Reference proteome</keyword>
<keyword id="KW-0677">Repeat</keyword>
<keyword id="KW-0964">Secreted</keyword>
<keyword id="KW-0732">Signal</keyword>
<keyword id="KW-0812">Transmembrane</keyword>
<keyword id="KW-1133">Transmembrane helix</keyword>
<organism>
    <name type="scientific">Homo sapiens</name>
    <name type="common">Human</name>
    <dbReference type="NCBI Taxonomy" id="9606"/>
    <lineage>
        <taxon>Eukaryota</taxon>
        <taxon>Metazoa</taxon>
        <taxon>Chordata</taxon>
        <taxon>Craniata</taxon>
        <taxon>Vertebrata</taxon>
        <taxon>Euteleostomi</taxon>
        <taxon>Mammalia</taxon>
        <taxon>Eutheria</taxon>
        <taxon>Euarchontoglires</taxon>
        <taxon>Primates</taxon>
        <taxon>Haplorrhini</taxon>
        <taxon>Catarrhini</taxon>
        <taxon>Hominidae</taxon>
        <taxon>Homo</taxon>
    </lineage>
</organism>
<evidence type="ECO:0000250" key="1">
    <source>
        <dbReference type="UniProtKB" id="P22272"/>
    </source>
</evidence>
<evidence type="ECO:0000255" key="2"/>
<evidence type="ECO:0000255" key="3">
    <source>
        <dbReference type="PROSITE-ProRule" id="PRU00114"/>
    </source>
</evidence>
<evidence type="ECO:0000255" key="4">
    <source>
        <dbReference type="PROSITE-ProRule" id="PRU00316"/>
    </source>
</evidence>
<evidence type="ECO:0000256" key="5">
    <source>
        <dbReference type="SAM" id="MobiDB-lite"/>
    </source>
</evidence>
<evidence type="ECO:0000269" key="6">
    <source>
    </source>
</evidence>
<evidence type="ECO:0000269" key="7">
    <source>
    </source>
</evidence>
<evidence type="ECO:0000269" key="8">
    <source>
    </source>
</evidence>
<evidence type="ECO:0000269" key="9">
    <source>
    </source>
</evidence>
<evidence type="ECO:0000269" key="10">
    <source>
    </source>
</evidence>
<evidence type="ECO:0000269" key="11">
    <source>
    </source>
</evidence>
<evidence type="ECO:0000269" key="12">
    <source>
    </source>
</evidence>
<evidence type="ECO:0000269" key="13">
    <source>
    </source>
</evidence>
<evidence type="ECO:0000269" key="14">
    <source>
    </source>
</evidence>
<evidence type="ECO:0000269" key="15">
    <source>
    </source>
</evidence>
<evidence type="ECO:0000269" key="16">
    <source>
    </source>
</evidence>
<evidence type="ECO:0000269" key="17">
    <source>
    </source>
</evidence>
<evidence type="ECO:0000303" key="18">
    <source>
    </source>
</evidence>
<evidence type="ECO:0000303" key="19">
    <source>
    </source>
</evidence>
<evidence type="ECO:0000303" key="20">
    <source>
    </source>
</evidence>
<evidence type="ECO:0000303" key="21">
    <source>
    </source>
</evidence>
<evidence type="ECO:0000303" key="22">
    <source>
    </source>
</evidence>
<evidence type="ECO:0000303" key="23">
    <source>
    </source>
</evidence>
<evidence type="ECO:0000303" key="24">
    <source>
    </source>
</evidence>
<evidence type="ECO:0000305" key="25"/>
<evidence type="ECO:0000305" key="26">
    <source>
    </source>
</evidence>
<evidence type="ECO:0000312" key="27">
    <source>
        <dbReference type="HGNC" id="HGNC:6019"/>
    </source>
</evidence>
<evidence type="ECO:0007744" key="28">
    <source>
        <dbReference type="PDB" id="1P9M"/>
    </source>
</evidence>
<evidence type="ECO:0007829" key="29">
    <source>
        <dbReference type="PDB" id="1N26"/>
    </source>
</evidence>
<proteinExistence type="evidence at protein level"/>
<feature type="signal peptide" evidence="12">
    <location>
        <begin position="1"/>
        <end position="19"/>
    </location>
</feature>
<feature type="chain" id="PRO_0000010895" description="Interleukin-6 receptor subunit alpha">
    <location>
        <begin position="20"/>
        <end position="468"/>
    </location>
</feature>
<feature type="chain" id="PRO_0000450730" description="Soluble interleukin-6 receptor subunit alpha">
    <location>
        <begin position="20"/>
        <end position="355"/>
    </location>
</feature>
<feature type="topological domain" description="Extracellular" evidence="2">
    <location>
        <begin position="20"/>
        <end position="365"/>
    </location>
</feature>
<feature type="transmembrane region" description="Helical" evidence="2">
    <location>
        <begin position="366"/>
        <end position="386"/>
    </location>
</feature>
<feature type="topological domain" description="Cytoplasmic" evidence="2">
    <location>
        <begin position="387"/>
        <end position="468"/>
    </location>
</feature>
<feature type="domain" description="Ig-like C2-type">
    <location>
        <begin position="26"/>
        <end position="112"/>
    </location>
</feature>
<feature type="domain" description="Fibronectin type-III 1" evidence="4">
    <location>
        <begin position="113"/>
        <end position="217"/>
    </location>
</feature>
<feature type="domain" description="Fibronectin type-III 2" evidence="4">
    <location>
        <begin position="218"/>
        <end position="316"/>
    </location>
</feature>
<feature type="region of interest" description="Disordered" evidence="5">
    <location>
        <begin position="303"/>
        <end position="328"/>
    </location>
</feature>
<feature type="region of interest" description="Disordered" evidence="5">
    <location>
        <begin position="421"/>
        <end position="468"/>
    </location>
</feature>
<feature type="short sequence motif" description="WSXWS motif">
    <location>
        <begin position="303"/>
        <end position="307"/>
    </location>
</feature>
<feature type="compositionally biased region" description="Pro residues" evidence="5">
    <location>
        <begin position="421"/>
        <end position="433"/>
    </location>
</feature>
<feature type="compositionally biased region" description="Basic and acidic residues" evidence="5">
    <location>
        <begin position="446"/>
        <end position="455"/>
    </location>
</feature>
<feature type="compositionally biased region" description="Polar residues" evidence="5">
    <location>
        <begin position="458"/>
        <end position="468"/>
    </location>
</feature>
<feature type="site" description="Not glycosylated" evidence="6">
    <location>
        <position position="245"/>
    </location>
</feature>
<feature type="site" description="Cleavage; by ADAM10 and ADAM17" evidence="14">
    <location>
        <begin position="355"/>
        <end position="356"/>
    </location>
</feature>
<feature type="glycosylation site" description="N-linked (GlcNAc...) asparagine" evidence="6 14">
    <location>
        <position position="55"/>
    </location>
</feature>
<feature type="glycosylation site" description="N-linked (GlcNAc...) asparagine" evidence="6 14">
    <location>
        <position position="93"/>
    </location>
</feature>
<feature type="glycosylation site" description="N-linked (GlcNAc...) asparagine" evidence="6 14">
    <location>
        <position position="221"/>
    </location>
</feature>
<feature type="glycosylation site" description="N-linked (GlcNAc...) asparagine" evidence="14">
    <location>
        <position position="245"/>
    </location>
</feature>
<feature type="glycosylation site" description="N-linked (GlcNAc...) asparagine" evidence="14">
    <location>
        <position position="350"/>
    </location>
</feature>
<feature type="glycosylation site" description="O-linked (GlcNAc) threonine" evidence="14">
    <location>
        <position position="352"/>
    </location>
</feature>
<feature type="disulfide bond" evidence="3 6">
    <location>
        <begin position="25"/>
        <end position="193"/>
    </location>
</feature>
<feature type="disulfide bond" evidence="3 6">
    <location>
        <begin position="47"/>
        <end position="96"/>
    </location>
</feature>
<feature type="disulfide bond" evidence="3 6">
    <location>
        <begin position="121"/>
        <end position="132"/>
    </location>
</feature>
<feature type="disulfide bond" evidence="3 6">
    <location>
        <begin position="165"/>
        <end position="176"/>
    </location>
</feature>
<feature type="splice variant" id="VSP_001682" description="In isoform 2." evidence="19 20 24">
    <original>VQDSSSVPLP</original>
    <variation>GSRRRGSCGL</variation>
    <location>
        <begin position="356"/>
        <end position="365"/>
    </location>
</feature>
<feature type="splice variant" id="VSP_001683" description="In isoform 2." evidence="19 20 24">
    <location>
        <begin position="366"/>
        <end position="468"/>
    </location>
</feature>
<feature type="sequence variant" id="VAR_084713" description="In HIES5; decreased STAT1 and STAT3 phosphorylation; dbSNP:rs1689606931." evidence="16">
    <original>I</original>
    <variation>N</variation>
    <location>
        <position position="279"/>
    </location>
</feature>
<feature type="sequence variant" id="VAR_084714" description="In HIES5; uncertain significance; no effect on STAT1 and STAT3 phosphorylation." evidence="16">
    <original>H</original>
    <variation>P</variation>
    <location>
        <position position="280"/>
    </location>
</feature>
<feature type="sequence variant" id="VAR_021995" description="Significantly associated with circulating levels of IL6 and soluble IL6R; increases cleavage by ADAM17; dbSNP:rs2228145." evidence="9 10 14">
    <original>D</original>
    <variation>A</variation>
    <location>
        <position position="358"/>
    </location>
</feature>
<feature type="sequence variant" id="VAR_049166" description="In dbSNP:rs2228146.">
    <original>V</original>
    <variation>I</variation>
    <location>
        <position position="385"/>
    </location>
</feature>
<feature type="mutagenesis site" description="Strongly induces cleavage and sIL6R levels. No effect on IL6R signaling; when associated with A-93, A-221, A-245 and A-350. Loss of cleavage by ADAM17; when associated with A-93, A-221, A-245 and A-350." evidence="14">
    <original>N</original>
    <variation>A</variation>
    <location>
        <position position="55"/>
    </location>
</feature>
<feature type="mutagenesis site" description="Strongly induces cleavage and sIL6R levels." evidence="14">
    <original>T</original>
    <variation>A</variation>
    <location>
        <position position="57"/>
    </location>
</feature>
<feature type="mutagenesis site" description="No effect on cleavage or sIL6R levels. No effect on IL6R signaling; when associated with A-55, A-221, A-245 and A-350. Loss of cleavage by ADAM17; when associated with A-55, A-221, A-245 and A-350." evidence="14">
    <original>N</original>
    <variation>A</variation>
    <location>
        <position position="93"/>
    </location>
</feature>
<feature type="mutagenesis site" description="Complete loss of ligand-binding." evidence="17">
    <original>C</original>
    <variation>S</variation>
    <location>
        <position position="121"/>
    </location>
</feature>
<feature type="mutagenesis site" description="No change of ligand-binding and IL6 signaling." evidence="17">
    <original>F</original>
    <variation>A</variation>
    <location>
        <position position="122"/>
    </location>
</feature>
<feature type="mutagenesis site" description="Complete loss of ligand-binding." evidence="17">
    <original>C</original>
    <variation>A</variation>
    <location>
        <position position="132"/>
    </location>
</feature>
<feature type="mutagenesis site" description="Complete loss of ligand-binding." evidence="17">
    <original>W</original>
    <variation>L</variation>
    <location>
        <position position="134"/>
    </location>
</feature>
<feature type="mutagenesis site" description="No change of ligand-binding and IL6 signaling." evidence="17">
    <original>P</original>
    <variation>G</variation>
    <location>
        <position position="140"/>
    </location>
</feature>
<feature type="mutagenesis site" description="No change of ligand-binding and IL6 signaling." evidence="17">
    <original>F</original>
    <variation>L</variation>
    <location>
        <position position="153"/>
    </location>
</feature>
<feature type="mutagenesis site" description="Complete loss of ligand-binding." evidence="17">
    <original>C</original>
    <variation>L</variation>
    <location>
        <position position="165"/>
    </location>
</feature>
<feature type="mutagenesis site" description="No change of ligand-binding and IL6 signaling." evidence="17">
    <original>F</original>
    <variation>L</variation>
    <location>
        <position position="174"/>
    </location>
</feature>
<feature type="mutagenesis site" description="Complete loss of ligand-binding." evidence="17">
    <original>C</original>
    <variation>A</variation>
    <location>
        <position position="176"/>
    </location>
</feature>
<feature type="mutagenesis site" description="30% decrease of ligand-binding and IL6 signaling." evidence="17">
    <original>D</original>
    <variation>T</variation>
    <location>
        <position position="184"/>
    </location>
</feature>
<feature type="mutagenesis site" description="80% decrease of ligand-binding and no IL6 signaling." evidence="17">
    <original>V</original>
    <variation>G</variation>
    <location>
        <position position="190"/>
    </location>
</feature>
<feature type="mutagenesis site" description="Complete loss of ligand-binding." evidence="17">
    <original>C</original>
    <variation>D</variation>
    <location>
        <position position="193"/>
    </location>
</feature>
<feature type="mutagenesis site" description="No change of ligand-binding and IL6 signaling." evidence="17">
    <original>C</original>
    <variation>A</variation>
    <location>
        <position position="211"/>
    </location>
</feature>
<feature type="mutagenesis site" description="Complete loss of ligand-binding." evidence="17">
    <original>D</original>
    <variation>V</variation>
    <location>
        <position position="217"/>
    </location>
</feature>
<feature type="mutagenesis site" description="No effect on cleavage or sIL6R levels. No effect on IL6R signaling; when associated with A-55, A-93, A-245 and A-350. Loss of cleavage by ADAM17; when associated with A-55, A-93, A-245 and A-350." evidence="14">
    <original>N</original>
    <variation>A</variation>
    <location>
        <position position="221"/>
    </location>
</feature>
<feature type="mutagenesis site" description="30% decrease of ligand-binding and IL6 signaling." evidence="17">
    <original>R</original>
    <variation>S</variation>
    <location>
        <position position="232"/>
    </location>
</feature>
<feature type="mutagenesis site" description="30% decrease of ligand-binding and increase of IL6 signaling." evidence="17">
    <original>W</original>
    <variation>Q</variation>
    <location>
        <position position="233"/>
    </location>
</feature>
<feature type="mutagenesis site" description="Slightly induces cleavage and sIL6R levels. No effect on IL6R signaling; when associated with A-55, A-93, A-221 and A-350. Loss of cleavage by ADAM17; when associated with A-55, A-93, A-221 and A-350." evidence="14">
    <original>N</original>
    <variation>A</variation>
    <location>
        <position position="245"/>
    </location>
</feature>
<feature type="mutagenesis site" description="50% decrease of ligand-binding and IL6 signaling." evidence="17">
    <original>E</original>
    <variation>A</variation>
    <location>
        <position position="254"/>
    </location>
</feature>
<feature type="mutagenesis site" description="30% increase of ligand-binding and 100% increase in IL6 signaling." evidence="17">
    <original>C</original>
    <variation>D</variation>
    <location>
        <position position="277"/>
    </location>
</feature>
<feature type="mutagenesis site" description="50% Decrease of ligand-binding and 50% increase in IL6 signaling." evidence="17">
    <original>V</original>
    <variation>N</variation>
    <location>
        <position position="278"/>
    </location>
</feature>
<feature type="mutagenesis site" description="Complete loss of ligand-binding." evidence="17">
    <original>I</original>
    <variation>D</variation>
    <location>
        <position position="279"/>
    </location>
</feature>
<feature type="mutagenesis site" description="No change of ligand-binding and no IL6 signaling." evidence="17">
    <original>H</original>
    <variation>I</variation>
    <location>
        <position position="280"/>
    </location>
</feature>
<feature type="mutagenesis site" description="70% decrease of ligand-binding and no IL6 signaling." evidence="17">
    <original>D</original>
    <variation>G</variation>
    <location>
        <position position="281"/>
    </location>
</feature>
<feature type="mutagenesis site" description="80% decrease of ligand-binding and no IL6 signaling." evidence="17">
    <original>G</original>
    <variation>D</variation>
    <location>
        <position position="285"/>
    </location>
</feature>
<feature type="mutagenesis site" description="Complete loss of ligand-binding." evidence="17">
    <original>Q</original>
    <variation>K</variation>
    <location>
        <position position="291"/>
    </location>
</feature>
<feature type="mutagenesis site" description="Complete loss of ligand-binding." evidence="17">
    <original>R</original>
    <variation>G</variation>
    <location>
        <position position="293"/>
    </location>
</feature>
<feature type="mutagenesis site" description="No effect on IL6R signaling; when associated with A-55, A-93, A-221 and A-245. Loss of cleavage by ADAM17; when associated with A-55, A-93, A-221 and A-245." evidence="14">
    <original>N</original>
    <variation>A</variation>
    <location>
        <position position="350"/>
    </location>
</feature>
<feature type="mutagenesis site" description="No effect on IL6R signaling." evidence="14">
    <original>T</original>
    <variation>A</variation>
    <location>
        <position position="352"/>
    </location>
</feature>
<feature type="mutagenesis site" description="Abolishes cleavage by ADAM17." evidence="14">
    <original>PV</original>
    <variation>IE</variation>
    <location>
        <begin position="355"/>
        <end position="356"/>
    </location>
</feature>
<feature type="mutagenesis site" description="Reduces cleavage by ADAM17." evidence="14">
    <original>P</original>
    <variation>I</variation>
    <variation>D</variation>
    <location>
        <position position="355"/>
    </location>
</feature>
<feature type="mutagenesis site" description="Abolishes cleavage by ADAM17." evidence="14">
    <original>V</original>
    <variation>E</variation>
    <variation>G</variation>
    <location>
        <position position="356"/>
    </location>
</feature>
<feature type="sequence conflict" description="In Ref. 5; BAD97302." evidence="25" ref="5">
    <original>G</original>
    <variation>D</variation>
    <location>
        <position position="210"/>
    </location>
</feature>
<feature type="strand" evidence="29">
    <location>
        <begin position="34"/>
        <end position="37"/>
    </location>
</feature>
<feature type="strand" evidence="29">
    <location>
        <begin position="43"/>
        <end position="46"/>
    </location>
</feature>
<feature type="strand" evidence="29">
    <location>
        <begin position="56"/>
        <end position="63"/>
    </location>
</feature>
<feature type="strand" evidence="29">
    <location>
        <begin position="65"/>
        <end position="68"/>
    </location>
</feature>
<feature type="strand" evidence="29">
    <location>
        <begin position="72"/>
        <end position="83"/>
    </location>
</feature>
<feature type="helix" evidence="29">
    <location>
        <begin position="88"/>
        <end position="90"/>
    </location>
</feature>
<feature type="strand" evidence="29">
    <location>
        <begin position="92"/>
        <end position="101"/>
    </location>
</feature>
<feature type="strand" evidence="29">
    <location>
        <begin position="105"/>
        <end position="110"/>
    </location>
</feature>
<feature type="strand" evidence="29">
    <location>
        <begin position="120"/>
        <end position="125"/>
    </location>
</feature>
<feature type="strand" evidence="29">
    <location>
        <begin position="130"/>
        <end position="134"/>
    </location>
</feature>
<feature type="strand" evidence="29">
    <location>
        <begin position="145"/>
        <end position="157"/>
    </location>
</feature>
<feature type="strand" evidence="29">
    <location>
        <begin position="159"/>
        <end position="168"/>
    </location>
</feature>
<feature type="turn" evidence="29">
    <location>
        <begin position="169"/>
        <end position="172"/>
    </location>
</feature>
<feature type="strand" evidence="29">
    <location>
        <begin position="173"/>
        <end position="178"/>
    </location>
</feature>
<feature type="strand" evidence="29">
    <location>
        <begin position="187"/>
        <end position="196"/>
    </location>
</feature>
<feature type="strand" evidence="29">
    <location>
        <begin position="199"/>
        <end position="202"/>
    </location>
</feature>
<feature type="strand" evidence="29">
    <location>
        <begin position="206"/>
        <end position="209"/>
    </location>
</feature>
<feature type="turn" evidence="29">
    <location>
        <begin position="210"/>
        <end position="212"/>
    </location>
</feature>
<feature type="strand" evidence="29">
    <location>
        <begin position="220"/>
        <end position="226"/>
    </location>
</feature>
<feature type="strand" evidence="29">
    <location>
        <begin position="234"/>
        <end position="239"/>
    </location>
</feature>
<feature type="strand" evidence="29">
    <location>
        <begin position="247"/>
        <end position="249"/>
    </location>
</feature>
<feature type="strand" evidence="29">
    <location>
        <begin position="251"/>
        <end position="259"/>
    </location>
</feature>
<feature type="strand" evidence="29">
    <location>
        <begin position="266"/>
        <end position="269"/>
    </location>
</feature>
<feature type="helix" evidence="29">
    <location>
        <begin position="271"/>
        <end position="273"/>
    </location>
</feature>
<feature type="strand" evidence="29">
    <location>
        <begin position="275"/>
        <end position="281"/>
    </location>
</feature>
<feature type="strand" evidence="29">
    <location>
        <begin position="288"/>
        <end position="296"/>
    </location>
</feature>
<feature type="turn" evidence="29">
    <location>
        <begin position="297"/>
        <end position="299"/>
    </location>
</feature>
<feature type="strand" evidence="29">
    <location>
        <begin position="310"/>
        <end position="312"/>
    </location>
</feature>
<protein>
    <recommendedName>
        <fullName evidence="25">Interleukin-6 receptor subunit alpha</fullName>
        <shortName>IL-6 receptor subunit alpha</shortName>
        <shortName>IL-6R subunit alpha</shortName>
        <shortName>IL-6R-alpha</shortName>
        <shortName>IL-6RA</shortName>
    </recommendedName>
    <alternativeName>
        <fullName>IL-6R 1</fullName>
    </alternativeName>
    <alternativeName>
        <fullName>Membrane glycoprotein 80</fullName>
        <shortName>gp80</shortName>
    </alternativeName>
    <cdAntigenName>CD126</cdAntigenName>
    <component>
        <recommendedName>
            <fullName evidence="25">Soluble interleukin-6 receptor subunit alpha</fullName>
            <shortName evidence="18 22 23">sIL6R</shortName>
        </recommendedName>
    </component>
</protein>
<accession>P08887</accession>
<accession>A8KAE8</accession>
<accession>B2R6V4</accession>
<accession>Q16202</accession>
<accession>Q53EQ7</accession>
<accession>Q5FWG2</accession>
<accession>Q5VZ23</accession>
<comment type="function">
    <text evidence="15 16 26">Part of the receptor for interleukin 6. Binds to IL6 with low affinity, but does not transduce a signal (PubMed:28265003). Signal activation necessitate an association with IL6ST. Activation leads to the regulation of the immune response, acute-phase reactions and hematopoiesis (PubMed:30995492, PubMed:31235509). The interaction with membrane-bound IL6R and IL6ST stimulates 'classic signaling', the restricted expression of the IL6R limits classic IL6 signaling to only a few tissues such as the liver and some cells of the immune system. Whereas the binding of IL6 and soluble IL6R to IL6ST stimulates 'trans-signaling'. Alternatively, 'cluster signaling' occurs when membrane-bound IL6:IL6R complexes on transmitter cells activate IL6ST receptors on neighboring receiver cells (Probable).</text>
</comment>
<comment type="function">
    <molecule>Isoform 1</molecule>
    <text evidence="1 26">Signaling via the membrane-bound IL6R is mostly regenerative and anti-inflammatory (Probable). Drives naive CD4(+) T cells to the Th17 lineage, through 'cluster signaling' by dendritic cells (By similarity).</text>
</comment>
<comment type="function">
    <molecule>Isoform 2</molecule>
    <text evidence="1 7 11">Soluble form of IL6 receptor (sIL6R) that acts as an agonist of IL6 activity (PubMed:21990364). The IL6:sIL6R complex (hyper-IL6) binds to IL6ST/gp130 on cell surfaces and induces signaling also on cells that do not express membrane-bound IL6R in a process called IL6 'trans-signaling'. sIL6R is causative for the pro-inflammatory properties of IL6 and an important player in the development of chronic inflammatory diseases (PubMed:21990364). In complex with IL6, is required for induction of VEGF production (PubMed:12794819). Plays a protective role during liver injury, being required for maintenance of tissue regeneration (By similarity). 'Trans-signaling' in central nervous system regulates energy and glucose homeostasis (By similarity).</text>
</comment>
<comment type="function">
    <molecule>Soluble interleukin-6 receptor subunit alpha</molecule>
    <text evidence="1 7 11">Soluble form of IL6 receptor (sIL6R) that acts as an agonist of IL6 activity (PubMed:21990364). The IL6:sIL6R complex (hyper-IL6) binds to IL6ST/gp130 on cell surfaces and induces signaling also on cells that do not express membrane-bound IL6R in a process called IL6 'trans-signaling'. sIL6R is causative for the pro-inflammatory properties of IL6 and an important player in the development of chronic inflammatory diseases (PubMed:21990364). In complex with IL6, is required for induction of VEGF production (PubMed:12794819). Plays a protective role during liver injury, being required for maintenance of tissue regeneration (By similarity). 'Trans-signaling' in central nervous system regulates energy and glucose homeostasis (By similarity).</text>
</comment>
<comment type="activity regulation">
    <text evidence="11">Classic and trans-signaling are both inhibited by tocilizumab, a humanized monoclonal antibody that blocks interleukin IL6R signaling.</text>
</comment>
<comment type="subunit">
    <text evidence="8 15">Component of a hexamer of two molecules each of IL6, IL6R and IL6ST; first binds to IL6 to associate with the signaling subunit IL6ST (PubMed:12829785, PubMed:28265003). Interacts (via N-terminal ectodomain) with SORL1; this interaction may affect IL6-binding to IL6R, hence decrease IL6 'classic-signaling' (PubMed:28265003).</text>
</comment>
<comment type="subunit">
    <molecule>Isoform 2</molecule>
    <text evidence="15">Also interacts with SORL1; this interaction leads to soluble IL6R internalization. May form a trimeric complex with the soluble SORL1 ectodomain and circulating IL6 receptor; this interaction might stabilize circulating IL6, hence promote IL6 'trans-signaling,.</text>
</comment>
<comment type="subunit">
    <molecule>Soluble interleukin-6 receptor subunit alpha</molecule>
    <text evidence="15">Also interacts with SORL1; this interaction leads to soluble IL6R internalization. May form a trimeric complex with the soluble SORL1 ectodomain and circulating IL6 receptor; this interaction might stabilize circulating IL6, hence promote IL6 'trans-signaling,.</text>
</comment>
<comment type="interaction">
    <interactant intactId="EBI-299383">
        <id>P08887</id>
    </interactant>
    <interactant intactId="EBI-720533">
        <id>P05231</id>
        <label>IL6</label>
    </interactant>
    <organismsDiffer>false</organismsDiffer>
    <experiments>7</experiments>
</comment>
<comment type="interaction">
    <interactant intactId="EBI-299383">
        <id>P08887</id>
    </interactant>
    <interactant intactId="EBI-744081">
        <id>Q96EQ0</id>
        <label>SGTB</label>
    </interactant>
    <organismsDiffer>false</organismsDiffer>
    <experiments>3</experiments>
</comment>
<comment type="interaction">
    <interactant intactId="EBI-299383">
        <id>P08887</id>
    </interactant>
    <interactant intactId="EBI-1171329">
        <id>Q92673</id>
        <label>SORL1</label>
    </interactant>
    <organismsDiffer>false</organismsDiffer>
    <experiments>7</experiments>
</comment>
<comment type="interaction">
    <interactant intactId="EBI-299383">
        <id>P08887</id>
    </interactant>
    <interactant intactId="EBI-9007403">
        <id>Q2HRC7</id>
        <label>K2</label>
    </interactant>
    <organismsDiffer>true</organismsDiffer>
    <experiments>3</experiments>
</comment>
<comment type="interaction">
    <interactant intactId="EBI-16630231">
        <id>P08887-2</id>
    </interactant>
    <interactant intactId="EBI-750973">
        <id>O00233</id>
        <label>PSMD9</label>
    </interactant>
    <organismsDiffer>false</organismsDiffer>
    <experiments>3</experiments>
</comment>
<comment type="interaction">
    <interactant intactId="EBI-52312520">
        <id>PRO_0000450730</id>
    </interactant>
    <interactant intactId="EBI-720533">
        <id>P05231</id>
        <label>IL6</label>
    </interactant>
    <organismsDiffer>false</organismsDiffer>
    <experiments>3</experiments>
</comment>
<comment type="subcellular location">
    <molecule>Isoform 1</molecule>
    <subcellularLocation>
        <location evidence="1">Cell membrane</location>
        <topology evidence="2">Single-pass type I membrane protein</topology>
    </subcellularLocation>
</comment>
<comment type="subcellular location">
    <molecule>Isoform 2</molecule>
    <subcellularLocation>
        <location evidence="14">Secreted</location>
    </subcellularLocation>
</comment>
<comment type="subcellular location">
    <molecule>Soluble interleukin-6 receptor subunit alpha</molecule>
    <subcellularLocation>
        <location evidence="14">Secreted</location>
    </subcellularLocation>
</comment>
<comment type="alternative products">
    <event type="alternative splicing"/>
    <isoform>
        <id>P08887-1</id>
        <name>1</name>
        <name>Long</name>
        <name evidence="22">mIL6R</name>
        <sequence type="displayed"/>
    </isoform>
    <isoform>
        <id>P08887-2</id>
        <name>2</name>
        <name>Short</name>
        <name evidence="21">sIL6R</name>
        <sequence type="described" ref="VSP_001682 VSP_001683"/>
    </isoform>
</comment>
<comment type="tissue specificity">
    <molecule>Isoform 2</molecule>
    <text evidence="14">Expressed in peripheral blood mononuclear cells and weakly found in urine and serum. 1%-20% of the total sIL6R in plasma is generated by alternative splicing (PubMed:28060820).</text>
</comment>
<comment type="domain">
    <text>The two fibronectin type-III-like domains, contained in the N-terminal part, form together a cytokine-binding domain.</text>
</comment>
<comment type="domain">
    <text>The WSXWS motif appears to be necessary for proper protein folding and thereby efficient intracellular transport and cell-surface receptor binding.</text>
</comment>
<comment type="PTM">
    <text evidence="13 14">A short soluble form is released from the membrane by proteolysis (PubMed:26876177). The sIL6R is formed mostly by limited proteolysis of membrane-bound receptors, a process referred to as ectodomain shedding, but is also directly secreted from the cells after alternative mRNA splicing (PubMed:26876177, PubMed:28060820). mIL6R is cleaved by the proteases ADAM10 and ADAM17 (PubMed:26876177, PubMed:28060820).</text>
</comment>
<comment type="PTM">
    <text evidence="14">Glycosylated. Glycosylation is dispensable for transport, signaling, and cell-surface turnover. Glycosylation at Asn-55 is a protease-regulatory exosite. Glycosylation is required for ADAM17-mediated proteolysis.</text>
</comment>
<comment type="polymorphism">
    <text evidence="10">Genetic variations in IL6R determine soluble IL6R serum levels [MIM:614689].</text>
</comment>
<comment type="polymorphism">
    <text evidence="10">Genetic variations in IL6R define the IL6 serum level quantitative trait locus [MIM:614752].</text>
</comment>
<comment type="disease" evidence="16">
    <disease id="DI-05873">
        <name>Hyper-IgE syndrome 5, autosomal recessive, with recurrent infections</name>
        <acronym>HIES5</acronym>
        <description>An immunologic disorder characterized by recurrent sinopulmonary and deep skin infections, mostly caused by bacteria, including H.influenza and S.aureus. Additional features include asthma, atopic dermatitis, and impaired inflammatory responses during infection. Disease onset is in early infancy.</description>
        <dbReference type="MIM" id="618944"/>
    </disease>
    <text>The disease is caused by variants affecting the gene represented in this entry.</text>
</comment>
<comment type="similarity">
    <text evidence="25">Belongs to the type I cytokine receptor family. Type 3 subfamily.</text>
</comment>